<comment type="catalytic activity">
    <reaction>
        <text>O-demethylpuromycin + S-adenosyl-L-methionine = puromycin + S-adenosyl-L-homocysteine + H(+)</text>
        <dbReference type="Rhea" id="RHEA:22280"/>
        <dbReference type="ChEBI" id="CHEBI:15378"/>
        <dbReference type="ChEBI" id="CHEBI:57856"/>
        <dbReference type="ChEBI" id="CHEBI:58037"/>
        <dbReference type="ChEBI" id="CHEBI:59789"/>
        <dbReference type="ChEBI" id="CHEBI:60255"/>
        <dbReference type="EC" id="2.1.1.38"/>
    </reaction>
</comment>
<comment type="similarity">
    <text evidence="1">Belongs to the class I-like SAM-binding methyltransferase superfamily. Cation-independent O-methyltransferase family.</text>
</comment>
<gene>
    <name type="primary">dmpM</name>
</gene>
<protein>
    <recommendedName>
        <fullName>O-demethylpuromycin-O-methyltransferase</fullName>
        <ecNumber>2.1.1.38</ecNumber>
    </recommendedName>
</protein>
<proteinExistence type="inferred from homology"/>
<feature type="chain" id="PRO_0000079944" description="O-demethylpuromycin-O-methyltransferase">
    <location>
        <begin position="1"/>
        <end position="376"/>
    </location>
</feature>
<feature type="region of interest" description="Disordered" evidence="2">
    <location>
        <begin position="1"/>
        <end position="28"/>
    </location>
</feature>
<feature type="compositionally biased region" description="Basic and acidic residues" evidence="2">
    <location>
        <begin position="19"/>
        <end position="28"/>
    </location>
</feature>
<feature type="active site" description="Proton acceptor" evidence="1">
    <location>
        <position position="281"/>
    </location>
</feature>
<feature type="binding site" evidence="1">
    <location>
        <position position="235"/>
    </location>
    <ligand>
        <name>S-adenosyl-L-methionine</name>
        <dbReference type="ChEBI" id="CHEBI:59789"/>
    </ligand>
</feature>
<feature type="binding site" evidence="1">
    <location>
        <begin position="261"/>
        <end position="263"/>
    </location>
    <ligand>
        <name>S-adenosyl-L-methionine</name>
        <dbReference type="ChEBI" id="CHEBI:59789"/>
    </ligand>
</feature>
<dbReference type="EC" id="2.1.1.38"/>
<dbReference type="EMBL" id="M74560">
    <property type="protein sequence ID" value="AAB00531.1"/>
    <property type="molecule type" value="Genomic_DNA"/>
</dbReference>
<dbReference type="RefSeq" id="WP_055528312.1">
    <property type="nucleotide sequence ID" value="NZ_CP023695.1"/>
</dbReference>
<dbReference type="SMR" id="P42712"/>
<dbReference type="OrthoDB" id="4145676at2"/>
<dbReference type="BioCyc" id="MetaCyc:MONOMER-13985"/>
<dbReference type="GO" id="GO:0030739">
    <property type="term" value="F:O-demethylpuromycin O-methyltransferase activity"/>
    <property type="evidence" value="ECO:0007669"/>
    <property type="project" value="UniProtKB-EC"/>
</dbReference>
<dbReference type="GO" id="GO:0008171">
    <property type="term" value="F:O-methyltransferase activity"/>
    <property type="evidence" value="ECO:0007669"/>
    <property type="project" value="InterPro"/>
</dbReference>
<dbReference type="GO" id="GO:0046983">
    <property type="term" value="F:protein dimerization activity"/>
    <property type="evidence" value="ECO:0007669"/>
    <property type="project" value="InterPro"/>
</dbReference>
<dbReference type="GO" id="GO:0032259">
    <property type="term" value="P:methylation"/>
    <property type="evidence" value="ECO:0007669"/>
    <property type="project" value="UniProtKB-KW"/>
</dbReference>
<dbReference type="CDD" id="cd02440">
    <property type="entry name" value="AdoMet_MTases"/>
    <property type="match status" value="1"/>
</dbReference>
<dbReference type="Gene3D" id="1.10.287.1350">
    <property type="match status" value="1"/>
</dbReference>
<dbReference type="Gene3D" id="3.40.50.150">
    <property type="entry name" value="Vaccinia Virus protein VP39"/>
    <property type="match status" value="1"/>
</dbReference>
<dbReference type="Gene3D" id="1.10.10.10">
    <property type="entry name" value="Winged helix-like DNA-binding domain superfamily/Winged helix DNA-binding domain"/>
    <property type="match status" value="1"/>
</dbReference>
<dbReference type="InterPro" id="IPR016461">
    <property type="entry name" value="COMT-like"/>
</dbReference>
<dbReference type="InterPro" id="IPR001077">
    <property type="entry name" value="O_MeTrfase_dom"/>
</dbReference>
<dbReference type="InterPro" id="IPR012967">
    <property type="entry name" value="Plant_O-MeTrfase_dimerisation"/>
</dbReference>
<dbReference type="InterPro" id="IPR029063">
    <property type="entry name" value="SAM-dependent_MTases_sf"/>
</dbReference>
<dbReference type="InterPro" id="IPR036388">
    <property type="entry name" value="WH-like_DNA-bd_sf"/>
</dbReference>
<dbReference type="InterPro" id="IPR036390">
    <property type="entry name" value="WH_DNA-bd_sf"/>
</dbReference>
<dbReference type="PANTHER" id="PTHR43712:SF2">
    <property type="entry name" value="O-METHYLTRANSFERASE CICE"/>
    <property type="match status" value="1"/>
</dbReference>
<dbReference type="PANTHER" id="PTHR43712">
    <property type="entry name" value="PUTATIVE (AFU_ORTHOLOGUE AFUA_4G14580)-RELATED"/>
    <property type="match status" value="1"/>
</dbReference>
<dbReference type="Pfam" id="PF08100">
    <property type="entry name" value="Dimerisation"/>
    <property type="match status" value="1"/>
</dbReference>
<dbReference type="Pfam" id="PF00891">
    <property type="entry name" value="Methyltransf_2"/>
    <property type="match status" value="1"/>
</dbReference>
<dbReference type="PIRSF" id="PIRSF005739">
    <property type="entry name" value="O-mtase"/>
    <property type="match status" value="1"/>
</dbReference>
<dbReference type="SUPFAM" id="SSF53335">
    <property type="entry name" value="S-adenosyl-L-methionine-dependent methyltransferases"/>
    <property type="match status" value="1"/>
</dbReference>
<dbReference type="SUPFAM" id="SSF46785">
    <property type="entry name" value="Winged helix' DNA-binding domain"/>
    <property type="match status" value="1"/>
</dbReference>
<dbReference type="PROSITE" id="PS51683">
    <property type="entry name" value="SAM_OMT_II"/>
    <property type="match status" value="1"/>
</dbReference>
<reference key="1">
    <citation type="journal article" date="1991" name="Gene">
        <title>Molecular analysis of the dmpM gene encoding an O-demethyl puromycin O-methyltransferase from Streptomyces alboniger.</title>
        <authorList>
            <person name="Lacalle R.A."/>
            <person name="Ruiz D."/>
            <person name="Jimenez A."/>
        </authorList>
    </citation>
    <scope>NUCLEOTIDE SEQUENCE [GENOMIC DNA]</scope>
    <source>
        <strain>ATCC 12461 / DSM 40043 / JCM 4309 / NBRC 12738 / NCIMB 13007 / NRRL B-2403</strain>
    </source>
</reference>
<name>DMPM_STRAD</name>
<organism>
    <name type="scientific">Streptomyces alboniger</name>
    <dbReference type="NCBI Taxonomy" id="132473"/>
    <lineage>
        <taxon>Bacteria</taxon>
        <taxon>Bacillati</taxon>
        <taxon>Actinomycetota</taxon>
        <taxon>Actinomycetes</taxon>
        <taxon>Kitasatosporales</taxon>
        <taxon>Streptomycetaceae</taxon>
        <taxon>Streptomyces</taxon>
        <taxon>Streptomyces aurantiacus group</taxon>
    </lineage>
</organism>
<accession>P42712</accession>
<keyword id="KW-0489">Methyltransferase</keyword>
<keyword id="KW-0949">S-adenosyl-L-methionine</keyword>
<keyword id="KW-0808">Transferase</keyword>
<sequence length="376" mass="40328">MAPTEATRGGPADPAPAPEAHRGGHTEHADPAEHAAQFGAQERILTLVWGYISSEILDLATRLDLPDLMGTEERAAAELAASLDTDPVATLRLLRAFAALGLAEETGAGRFRLTPAGHRLRTDVPDSLHAFVRQGMGVFRQAWSHFDHSIRTGEPAFDQVFGTDFFSYLSERPELSGTFTSSMREATRTMSTALAKEEEYDFSSYGTVVDIGGADGSLLAAVLSAHPGVEGVVFDSPEGARDAAATLDAAGVGERGRVETGDFFTRVPGGGDLYVLKSILHDWSDARSADILRTVRAAMPAHARLLVVEVLLPDTVDSSAHPLGYLSDLYMLVNMGGRERSERDLRSLLSDTGFRTTRVRTPPGLTPFSLIEAAPV</sequence>
<evidence type="ECO:0000255" key="1">
    <source>
        <dbReference type="PROSITE-ProRule" id="PRU01020"/>
    </source>
</evidence>
<evidence type="ECO:0000256" key="2">
    <source>
        <dbReference type="SAM" id="MobiDB-lite"/>
    </source>
</evidence>